<dbReference type="EMBL" id="AB024710">
    <property type="protein sequence ID" value="BAA86958.1"/>
    <property type="molecule type" value="Genomic_DNA"/>
</dbReference>
<dbReference type="EMBL" id="CP000100">
    <property type="protein sequence ID" value="ABB56601.1"/>
    <property type="molecule type" value="Genomic_DNA"/>
</dbReference>
<dbReference type="RefSeq" id="WP_011243265.1">
    <property type="nucleotide sequence ID" value="NZ_JACJTX010000002.1"/>
</dbReference>
<dbReference type="SMR" id="Q31QR8"/>
<dbReference type="STRING" id="1140.Synpcc7942_0569"/>
<dbReference type="PaxDb" id="1140-Synpcc7942_0569"/>
<dbReference type="KEGG" id="syf:Synpcc7942_0569"/>
<dbReference type="eggNOG" id="COG0568">
    <property type="taxonomic scope" value="Bacteria"/>
</dbReference>
<dbReference type="HOGENOM" id="CLU_014793_3_4_3"/>
<dbReference type="OrthoDB" id="551215at2"/>
<dbReference type="BioCyc" id="SYNEL:SYNPCC7942_0569-MONOMER"/>
<dbReference type="Proteomes" id="UP000889800">
    <property type="component" value="Chromosome"/>
</dbReference>
<dbReference type="GO" id="GO:0005737">
    <property type="term" value="C:cytoplasm"/>
    <property type="evidence" value="ECO:0007669"/>
    <property type="project" value="UniProtKB-SubCell"/>
</dbReference>
<dbReference type="GO" id="GO:0003677">
    <property type="term" value="F:DNA binding"/>
    <property type="evidence" value="ECO:0007669"/>
    <property type="project" value="UniProtKB-KW"/>
</dbReference>
<dbReference type="GO" id="GO:0016987">
    <property type="term" value="F:sigma factor activity"/>
    <property type="evidence" value="ECO:0007669"/>
    <property type="project" value="UniProtKB-KW"/>
</dbReference>
<dbReference type="GO" id="GO:0006352">
    <property type="term" value="P:DNA-templated transcription initiation"/>
    <property type="evidence" value="ECO:0007669"/>
    <property type="project" value="InterPro"/>
</dbReference>
<dbReference type="CDD" id="cd06171">
    <property type="entry name" value="Sigma70_r4"/>
    <property type="match status" value="1"/>
</dbReference>
<dbReference type="Gene3D" id="1.10.601.10">
    <property type="entry name" value="RNA Polymerase Primary Sigma Factor"/>
    <property type="match status" value="1"/>
</dbReference>
<dbReference type="Gene3D" id="1.10.10.10">
    <property type="entry name" value="Winged helix-like DNA-binding domain superfamily/Winged helix DNA-binding domain"/>
    <property type="match status" value="2"/>
</dbReference>
<dbReference type="InterPro" id="IPR014284">
    <property type="entry name" value="RNA_pol_sigma-70_dom"/>
</dbReference>
<dbReference type="InterPro" id="IPR000943">
    <property type="entry name" value="RNA_pol_sigma70"/>
</dbReference>
<dbReference type="InterPro" id="IPR009042">
    <property type="entry name" value="RNA_pol_sigma70_r1_2"/>
</dbReference>
<dbReference type="InterPro" id="IPR007627">
    <property type="entry name" value="RNA_pol_sigma70_r2"/>
</dbReference>
<dbReference type="InterPro" id="IPR007624">
    <property type="entry name" value="RNA_pol_sigma70_r3"/>
</dbReference>
<dbReference type="InterPro" id="IPR007630">
    <property type="entry name" value="RNA_pol_sigma70_r4"/>
</dbReference>
<dbReference type="InterPro" id="IPR013325">
    <property type="entry name" value="RNA_pol_sigma_r2"/>
</dbReference>
<dbReference type="InterPro" id="IPR013324">
    <property type="entry name" value="RNA_pol_sigma_r3/r4-like"/>
</dbReference>
<dbReference type="InterPro" id="IPR017848">
    <property type="entry name" value="RNA_pol_sigma_RpoD/SigA_cyanob"/>
</dbReference>
<dbReference type="InterPro" id="IPR050239">
    <property type="entry name" value="Sigma-70_RNA_pol_init_factors"/>
</dbReference>
<dbReference type="InterPro" id="IPR036388">
    <property type="entry name" value="WH-like_DNA-bd_sf"/>
</dbReference>
<dbReference type="NCBIfam" id="TIGR02997">
    <property type="entry name" value="Sig70-cyanoRpoD"/>
    <property type="match status" value="1"/>
</dbReference>
<dbReference type="NCBIfam" id="TIGR02937">
    <property type="entry name" value="sigma70-ECF"/>
    <property type="match status" value="1"/>
</dbReference>
<dbReference type="PANTHER" id="PTHR30603">
    <property type="entry name" value="RNA POLYMERASE SIGMA FACTOR RPO"/>
    <property type="match status" value="1"/>
</dbReference>
<dbReference type="PANTHER" id="PTHR30603:SF60">
    <property type="entry name" value="RNA POLYMERASE SIGMA FACTOR RPOD"/>
    <property type="match status" value="1"/>
</dbReference>
<dbReference type="Pfam" id="PF00140">
    <property type="entry name" value="Sigma70_r1_2"/>
    <property type="match status" value="1"/>
</dbReference>
<dbReference type="Pfam" id="PF04542">
    <property type="entry name" value="Sigma70_r2"/>
    <property type="match status" value="1"/>
</dbReference>
<dbReference type="Pfam" id="PF04539">
    <property type="entry name" value="Sigma70_r3"/>
    <property type="match status" value="1"/>
</dbReference>
<dbReference type="Pfam" id="PF04545">
    <property type="entry name" value="Sigma70_r4"/>
    <property type="match status" value="1"/>
</dbReference>
<dbReference type="PRINTS" id="PR00046">
    <property type="entry name" value="SIGMA70FCT"/>
</dbReference>
<dbReference type="SUPFAM" id="SSF88946">
    <property type="entry name" value="Sigma2 domain of RNA polymerase sigma factors"/>
    <property type="match status" value="1"/>
</dbReference>
<dbReference type="SUPFAM" id="SSF88659">
    <property type="entry name" value="Sigma3 and sigma4 domains of RNA polymerase sigma factors"/>
    <property type="match status" value="2"/>
</dbReference>
<dbReference type="PROSITE" id="PS00715">
    <property type="entry name" value="SIGMA70_1"/>
    <property type="match status" value="1"/>
</dbReference>
<dbReference type="PROSITE" id="PS00716">
    <property type="entry name" value="SIGMA70_2"/>
    <property type="match status" value="1"/>
</dbReference>
<accession>Q31QR8</accession>
<accession>Q9R6V7</accession>
<feature type="chain" id="PRO_0000345948" description="RNA polymerase sigma factor SigA4">
    <location>
        <begin position="1"/>
        <end position="311"/>
    </location>
</feature>
<feature type="DNA-binding region" description="H-T-H motif" evidence="1">
    <location>
        <begin position="273"/>
        <end position="292"/>
    </location>
</feature>
<feature type="region of interest" description="Sigma-70 factor domain-2" evidence="1">
    <location>
        <begin position="78"/>
        <end position="148"/>
    </location>
</feature>
<feature type="region of interest" description="Sigma-70 factor domain-3" evidence="1">
    <location>
        <begin position="157"/>
        <end position="234"/>
    </location>
</feature>
<feature type="region of interest" description="Sigma-70 factor domain-4" evidence="1">
    <location>
        <begin position="247"/>
        <end position="304"/>
    </location>
</feature>
<feature type="short sequence motif" description="Interaction with polymerase core subunit RpoC">
    <location>
        <begin position="102"/>
        <end position="105"/>
    </location>
</feature>
<feature type="sequence conflict" description="In Ref. 1; BAA86958." evidence="2" ref="1">
    <original>Y</original>
    <variation>C</variation>
    <location>
        <position position="93"/>
    </location>
</feature>
<gene>
    <name type="primary">sigA4</name>
    <name type="synonym">rpoD4</name>
    <name type="ordered locus">Synpcc7942_0569</name>
</gene>
<keyword id="KW-0963">Cytoplasm</keyword>
<keyword id="KW-0238">DNA-binding</keyword>
<keyword id="KW-1185">Reference proteome</keyword>
<keyword id="KW-0731">Sigma factor</keyword>
<keyword id="KW-0804">Transcription</keyword>
<keyword id="KW-0805">Transcription regulation</keyword>
<reference key="1">
    <citation type="submission" date="1999-03" db="EMBL/GenBank/DDBJ databases">
        <title>A group 2 sigma factor gene rpoD4 of Synechococcus PCC7942.</title>
        <authorList>
            <person name="Tanaka K."/>
        </authorList>
    </citation>
    <scope>NUCLEOTIDE SEQUENCE [GENOMIC DNA]</scope>
</reference>
<reference key="2">
    <citation type="submission" date="2005-08" db="EMBL/GenBank/DDBJ databases">
        <title>Complete sequence of chromosome 1 of Synechococcus elongatus PCC 7942.</title>
        <authorList>
            <consortium name="US DOE Joint Genome Institute"/>
            <person name="Copeland A."/>
            <person name="Lucas S."/>
            <person name="Lapidus A."/>
            <person name="Barry K."/>
            <person name="Detter J.C."/>
            <person name="Glavina T."/>
            <person name="Hammon N."/>
            <person name="Israni S."/>
            <person name="Pitluck S."/>
            <person name="Schmutz J."/>
            <person name="Larimer F."/>
            <person name="Land M."/>
            <person name="Kyrpides N."/>
            <person name="Lykidis A."/>
            <person name="Golden S."/>
            <person name="Richardson P."/>
        </authorList>
    </citation>
    <scope>NUCLEOTIDE SEQUENCE [LARGE SCALE GENOMIC DNA]</scope>
    <source>
        <strain>ATCC 33912 / PCC 7942 / FACHB-805</strain>
    </source>
</reference>
<name>SIGA4_SYNE7</name>
<comment type="function">
    <text evidence="1">Sigma factors are initiation factors that promote the attachment of RNA polymerase to specific initiation sites and are then released.</text>
</comment>
<comment type="subcellular location">
    <subcellularLocation>
        <location evidence="2">Cytoplasm</location>
    </subcellularLocation>
</comment>
<comment type="similarity">
    <text evidence="2">Belongs to the sigma-70 factor family.</text>
</comment>
<evidence type="ECO:0000250" key="1"/>
<evidence type="ECO:0000305" key="2"/>
<proteinExistence type="inferred from homology"/>
<protein>
    <recommendedName>
        <fullName>RNA polymerase sigma factor SigA4</fullName>
    </recommendedName>
</protein>
<sequence length="311" mass="35588">MNVQERRNLNAAVERHTSDHVSWYLSSIGRIPLLTAEEEVELSRKVQLMMALLENPDAESNSENQAVLQAGQRAKTKMLKANLRLVVSVAKKYQNQGLELLDLIQEGSLGLERAVEKFDPALGYKFSTYAYWWIRQSMTRAIDNHARTIRLPIHVSEKISRIKKMTRELTHQLKRLPSRAEIAEALKLPLQDVEMLLSQSTPCTSLDAQARGDDGRSFLGDLIPDPKSLEPMDAMDRHIQHEQISTWLAHLTEREQQVLQLRFGLHDGEQHTLAEIGRRLNVSRERIRQVEARALQKLRVLSQQPLCPEAC</sequence>
<organism>
    <name type="scientific">Synechococcus elongatus (strain ATCC 33912 / PCC 7942 / FACHB-805)</name>
    <name type="common">Anacystis nidulans R2</name>
    <dbReference type="NCBI Taxonomy" id="1140"/>
    <lineage>
        <taxon>Bacteria</taxon>
        <taxon>Bacillati</taxon>
        <taxon>Cyanobacteriota</taxon>
        <taxon>Cyanophyceae</taxon>
        <taxon>Synechococcales</taxon>
        <taxon>Synechococcaceae</taxon>
        <taxon>Synechococcus</taxon>
    </lineage>
</organism>